<keyword id="KW-0963">Cytoplasm</keyword>
<keyword id="KW-0648">Protein biosynthesis</keyword>
<organism>
    <name type="scientific">Ralstonia pickettii (strain 12J)</name>
    <dbReference type="NCBI Taxonomy" id="402626"/>
    <lineage>
        <taxon>Bacteria</taxon>
        <taxon>Pseudomonadati</taxon>
        <taxon>Pseudomonadota</taxon>
        <taxon>Betaproteobacteria</taxon>
        <taxon>Burkholderiales</taxon>
        <taxon>Burkholderiaceae</taxon>
        <taxon>Ralstonia</taxon>
    </lineage>
</organism>
<reference key="1">
    <citation type="submission" date="2008-05" db="EMBL/GenBank/DDBJ databases">
        <title>Complete sequence of chromosome 1 of Ralstonia pickettii 12J.</title>
        <authorList>
            <person name="Lucas S."/>
            <person name="Copeland A."/>
            <person name="Lapidus A."/>
            <person name="Glavina del Rio T."/>
            <person name="Dalin E."/>
            <person name="Tice H."/>
            <person name="Bruce D."/>
            <person name="Goodwin L."/>
            <person name="Pitluck S."/>
            <person name="Meincke L."/>
            <person name="Brettin T."/>
            <person name="Detter J.C."/>
            <person name="Han C."/>
            <person name="Kuske C.R."/>
            <person name="Schmutz J."/>
            <person name="Larimer F."/>
            <person name="Land M."/>
            <person name="Hauser L."/>
            <person name="Kyrpides N."/>
            <person name="Mikhailova N."/>
            <person name="Marsh T."/>
            <person name="Richardson P."/>
        </authorList>
    </citation>
    <scope>NUCLEOTIDE SEQUENCE [LARGE SCALE GENOMIC DNA]</scope>
    <source>
        <strain>12J</strain>
    </source>
</reference>
<evidence type="ECO:0000255" key="1">
    <source>
        <dbReference type="HAMAP-Rule" id="MF_00040"/>
    </source>
</evidence>
<gene>
    <name evidence="1" type="primary">frr</name>
    <name type="ordered locus">Rpic_1281</name>
</gene>
<accession>B2UB09</accession>
<sequence length="186" mass="20746">MSVADVKKNAEQKMQKSIEALKTDLAKIRTGRAHTGLLDHVQVDYYGSMVPISQVANVTLVDARTIGVQPWEKKMVQAVEKAIREADLGLNPATMGDIIRVPTPALTEERRKELTKVVKGEGEDAKVAVRNLRRDANEQLKKLVKDKAISEDDERRGGDEVQKLTDKFVAEIDKLVAEKDKEIMTV</sequence>
<name>RRF_RALPJ</name>
<dbReference type="EMBL" id="CP001068">
    <property type="protein sequence ID" value="ACD26425.1"/>
    <property type="molecule type" value="Genomic_DNA"/>
</dbReference>
<dbReference type="SMR" id="B2UB09"/>
<dbReference type="STRING" id="402626.Rpic_1281"/>
<dbReference type="KEGG" id="rpi:Rpic_1281"/>
<dbReference type="eggNOG" id="COG0233">
    <property type="taxonomic scope" value="Bacteria"/>
</dbReference>
<dbReference type="HOGENOM" id="CLU_073981_2_1_4"/>
<dbReference type="GO" id="GO:0005829">
    <property type="term" value="C:cytosol"/>
    <property type="evidence" value="ECO:0007669"/>
    <property type="project" value="GOC"/>
</dbReference>
<dbReference type="GO" id="GO:0043023">
    <property type="term" value="F:ribosomal large subunit binding"/>
    <property type="evidence" value="ECO:0007669"/>
    <property type="project" value="TreeGrafter"/>
</dbReference>
<dbReference type="GO" id="GO:0002184">
    <property type="term" value="P:cytoplasmic translational termination"/>
    <property type="evidence" value="ECO:0007669"/>
    <property type="project" value="TreeGrafter"/>
</dbReference>
<dbReference type="CDD" id="cd00520">
    <property type="entry name" value="RRF"/>
    <property type="match status" value="1"/>
</dbReference>
<dbReference type="FunFam" id="1.10.132.20:FF:000001">
    <property type="entry name" value="Ribosome-recycling factor"/>
    <property type="match status" value="1"/>
</dbReference>
<dbReference type="FunFam" id="3.30.1360.40:FF:000001">
    <property type="entry name" value="Ribosome-recycling factor"/>
    <property type="match status" value="1"/>
</dbReference>
<dbReference type="Gene3D" id="3.30.1360.40">
    <property type="match status" value="1"/>
</dbReference>
<dbReference type="Gene3D" id="1.10.132.20">
    <property type="entry name" value="Ribosome-recycling factor"/>
    <property type="match status" value="1"/>
</dbReference>
<dbReference type="HAMAP" id="MF_00040">
    <property type="entry name" value="RRF"/>
    <property type="match status" value="1"/>
</dbReference>
<dbReference type="InterPro" id="IPR002661">
    <property type="entry name" value="Ribosome_recyc_fac"/>
</dbReference>
<dbReference type="InterPro" id="IPR023584">
    <property type="entry name" value="Ribosome_recyc_fac_dom"/>
</dbReference>
<dbReference type="InterPro" id="IPR036191">
    <property type="entry name" value="RRF_sf"/>
</dbReference>
<dbReference type="NCBIfam" id="TIGR00496">
    <property type="entry name" value="frr"/>
    <property type="match status" value="1"/>
</dbReference>
<dbReference type="PANTHER" id="PTHR20982:SF3">
    <property type="entry name" value="MITOCHONDRIAL RIBOSOME RECYCLING FACTOR PSEUDO 1"/>
    <property type="match status" value="1"/>
</dbReference>
<dbReference type="PANTHER" id="PTHR20982">
    <property type="entry name" value="RIBOSOME RECYCLING FACTOR"/>
    <property type="match status" value="1"/>
</dbReference>
<dbReference type="Pfam" id="PF01765">
    <property type="entry name" value="RRF"/>
    <property type="match status" value="1"/>
</dbReference>
<dbReference type="SUPFAM" id="SSF55194">
    <property type="entry name" value="Ribosome recycling factor, RRF"/>
    <property type="match status" value="1"/>
</dbReference>
<comment type="function">
    <text evidence="1">Responsible for the release of ribosomes from messenger RNA at the termination of protein biosynthesis. May increase the efficiency of translation by recycling ribosomes from one round of translation to another.</text>
</comment>
<comment type="subcellular location">
    <subcellularLocation>
        <location evidence="1">Cytoplasm</location>
    </subcellularLocation>
</comment>
<comment type="similarity">
    <text evidence="1">Belongs to the RRF family.</text>
</comment>
<feature type="chain" id="PRO_1000090773" description="Ribosome-recycling factor">
    <location>
        <begin position="1"/>
        <end position="186"/>
    </location>
</feature>
<proteinExistence type="inferred from homology"/>
<protein>
    <recommendedName>
        <fullName evidence="1">Ribosome-recycling factor</fullName>
        <shortName evidence="1">RRF</shortName>
    </recommendedName>
    <alternativeName>
        <fullName evidence="1">Ribosome-releasing factor</fullName>
    </alternativeName>
</protein>